<evidence type="ECO:0000255" key="1">
    <source>
        <dbReference type="HAMAP-Rule" id="MF_00719"/>
    </source>
</evidence>
<keyword id="KW-1003">Cell membrane</keyword>
<keyword id="KW-0169">Cobalamin biosynthesis</keyword>
<keyword id="KW-0460">Magnesium</keyword>
<keyword id="KW-0472">Membrane</keyword>
<keyword id="KW-0808">Transferase</keyword>
<keyword id="KW-0812">Transmembrane</keyword>
<keyword id="KW-1133">Transmembrane helix</keyword>
<name>COBS_CLOP1</name>
<gene>
    <name evidence="1" type="primary">cobS</name>
    <name type="ordered locus">CPF_1291</name>
</gene>
<proteinExistence type="inferred from homology"/>
<comment type="function">
    <text evidence="1">Joins adenosylcobinamide-GDP and alpha-ribazole to generate adenosylcobalamin (Ado-cobalamin). Also synthesizes adenosylcobalamin 5'-phosphate from adenosylcobinamide-GDP and alpha-ribazole 5'-phosphate.</text>
</comment>
<comment type="catalytic activity">
    <reaction evidence="1">
        <text>alpha-ribazole + adenosylcob(III)inamide-GDP = adenosylcob(III)alamin + GMP + H(+)</text>
        <dbReference type="Rhea" id="RHEA:16049"/>
        <dbReference type="ChEBI" id="CHEBI:10329"/>
        <dbReference type="ChEBI" id="CHEBI:15378"/>
        <dbReference type="ChEBI" id="CHEBI:18408"/>
        <dbReference type="ChEBI" id="CHEBI:58115"/>
        <dbReference type="ChEBI" id="CHEBI:60487"/>
        <dbReference type="EC" id="2.7.8.26"/>
    </reaction>
</comment>
<comment type="catalytic activity">
    <reaction evidence="1">
        <text>alpha-ribazole 5'-phosphate + adenosylcob(III)inamide-GDP = adenosylcob(III)alamin 5'-phosphate + GMP + H(+)</text>
        <dbReference type="Rhea" id="RHEA:23560"/>
        <dbReference type="ChEBI" id="CHEBI:15378"/>
        <dbReference type="ChEBI" id="CHEBI:57918"/>
        <dbReference type="ChEBI" id="CHEBI:58115"/>
        <dbReference type="ChEBI" id="CHEBI:60487"/>
        <dbReference type="ChEBI" id="CHEBI:60493"/>
        <dbReference type="EC" id="2.7.8.26"/>
    </reaction>
</comment>
<comment type="cofactor">
    <cofactor evidence="1">
        <name>Mg(2+)</name>
        <dbReference type="ChEBI" id="CHEBI:18420"/>
    </cofactor>
</comment>
<comment type="pathway">
    <text evidence="1">Cofactor biosynthesis; adenosylcobalamin biosynthesis; adenosylcobalamin from cob(II)yrinate a,c-diamide: step 7/7.</text>
</comment>
<comment type="subcellular location">
    <subcellularLocation>
        <location evidence="1">Cell membrane</location>
        <topology evidence="1">Multi-pass membrane protein</topology>
    </subcellularLocation>
</comment>
<comment type="similarity">
    <text evidence="1">Belongs to the CobS family.</text>
</comment>
<sequence length="251" mass="28044">MKIFYKAINMTLSMFTVIPLPKYEWDDRAAKHIMKLYPFIGLIIGALWYLSFFVLSKLNVPIMLMAALILTVPYILTGFLHLDGFMDVSDALLSRRDKETKLRILKDSTVGAFSVISVVLLLLVEFAGMFTVLNKNLDMRILIFIPIASRVINGYFIVSQEMLGQSSLAKFFKEGTGKVDEIILLGIYVLVALITFFTLGINYLIAILAMGLISFILLLKVKKELGGINGDVAGYILVLMEFTGILLLGII</sequence>
<accession>Q0TRK3</accession>
<reference key="1">
    <citation type="journal article" date="2006" name="Genome Res.">
        <title>Skewed genomic variability in strains of the toxigenic bacterial pathogen, Clostridium perfringens.</title>
        <authorList>
            <person name="Myers G.S.A."/>
            <person name="Rasko D.A."/>
            <person name="Cheung J.K."/>
            <person name="Ravel J."/>
            <person name="Seshadri R."/>
            <person name="DeBoy R.T."/>
            <person name="Ren Q."/>
            <person name="Varga J."/>
            <person name="Awad M.M."/>
            <person name="Brinkac L.M."/>
            <person name="Daugherty S.C."/>
            <person name="Haft D.H."/>
            <person name="Dodson R.J."/>
            <person name="Madupu R."/>
            <person name="Nelson W.C."/>
            <person name="Rosovitz M.J."/>
            <person name="Sullivan S.A."/>
            <person name="Khouri H."/>
            <person name="Dimitrov G.I."/>
            <person name="Watkins K.L."/>
            <person name="Mulligan S."/>
            <person name="Benton J."/>
            <person name="Radune D."/>
            <person name="Fisher D.J."/>
            <person name="Atkins H.S."/>
            <person name="Hiscox T."/>
            <person name="Jost B.H."/>
            <person name="Billington S.J."/>
            <person name="Songer J.G."/>
            <person name="McClane B.A."/>
            <person name="Titball R.W."/>
            <person name="Rood J.I."/>
            <person name="Melville S.B."/>
            <person name="Paulsen I.T."/>
        </authorList>
    </citation>
    <scope>NUCLEOTIDE SEQUENCE [LARGE SCALE GENOMIC DNA]</scope>
    <source>
        <strain>ATCC 13124 / DSM 756 / JCM 1290 / NCIMB 6125 / NCTC 8237 / S 107 / Type A</strain>
    </source>
</reference>
<protein>
    <recommendedName>
        <fullName evidence="1">Adenosylcobinamide-GDP ribazoletransferase</fullName>
        <ecNumber evidence="1">2.7.8.26</ecNumber>
    </recommendedName>
    <alternativeName>
        <fullName evidence="1">Cobalamin synthase</fullName>
    </alternativeName>
    <alternativeName>
        <fullName evidence="1">Cobalamin-5'-phosphate synthase</fullName>
    </alternativeName>
</protein>
<dbReference type="EC" id="2.7.8.26" evidence="1"/>
<dbReference type="EMBL" id="CP000246">
    <property type="protein sequence ID" value="ABG83805.1"/>
    <property type="molecule type" value="Genomic_DNA"/>
</dbReference>
<dbReference type="RefSeq" id="WP_011590654.1">
    <property type="nucleotide sequence ID" value="NC_008261.1"/>
</dbReference>
<dbReference type="STRING" id="195103.CPF_1291"/>
<dbReference type="PaxDb" id="195103-CPF_1291"/>
<dbReference type="KEGG" id="cpf:CPF_1291"/>
<dbReference type="eggNOG" id="COG0368">
    <property type="taxonomic scope" value="Bacteria"/>
</dbReference>
<dbReference type="HOGENOM" id="CLU_057426_1_2_9"/>
<dbReference type="UniPathway" id="UPA00148">
    <property type="reaction ID" value="UER00238"/>
</dbReference>
<dbReference type="Proteomes" id="UP000001823">
    <property type="component" value="Chromosome"/>
</dbReference>
<dbReference type="GO" id="GO:0005886">
    <property type="term" value="C:plasma membrane"/>
    <property type="evidence" value="ECO:0007669"/>
    <property type="project" value="UniProtKB-SubCell"/>
</dbReference>
<dbReference type="GO" id="GO:0051073">
    <property type="term" value="F:adenosylcobinamide-GDP ribazoletransferase activity"/>
    <property type="evidence" value="ECO:0007669"/>
    <property type="project" value="UniProtKB-UniRule"/>
</dbReference>
<dbReference type="GO" id="GO:0008818">
    <property type="term" value="F:cobalamin 5'-phosphate synthase activity"/>
    <property type="evidence" value="ECO:0007669"/>
    <property type="project" value="UniProtKB-UniRule"/>
</dbReference>
<dbReference type="GO" id="GO:0009236">
    <property type="term" value="P:cobalamin biosynthetic process"/>
    <property type="evidence" value="ECO:0007669"/>
    <property type="project" value="UniProtKB-UniRule"/>
</dbReference>
<dbReference type="HAMAP" id="MF_00719">
    <property type="entry name" value="CobS"/>
    <property type="match status" value="1"/>
</dbReference>
<dbReference type="InterPro" id="IPR003805">
    <property type="entry name" value="CobS"/>
</dbReference>
<dbReference type="PANTHER" id="PTHR34148">
    <property type="entry name" value="ADENOSYLCOBINAMIDE-GDP RIBAZOLETRANSFERASE"/>
    <property type="match status" value="1"/>
</dbReference>
<dbReference type="PANTHER" id="PTHR34148:SF1">
    <property type="entry name" value="ADENOSYLCOBINAMIDE-GDP RIBAZOLETRANSFERASE"/>
    <property type="match status" value="1"/>
</dbReference>
<dbReference type="Pfam" id="PF02654">
    <property type="entry name" value="CobS"/>
    <property type="match status" value="1"/>
</dbReference>
<feature type="chain" id="PRO_1000045764" description="Adenosylcobinamide-GDP ribazoletransferase">
    <location>
        <begin position="1"/>
        <end position="251"/>
    </location>
</feature>
<feature type="transmembrane region" description="Helical" evidence="1">
    <location>
        <begin position="36"/>
        <end position="56"/>
    </location>
</feature>
<feature type="transmembrane region" description="Helical" evidence="1">
    <location>
        <begin position="60"/>
        <end position="80"/>
    </location>
</feature>
<feature type="transmembrane region" description="Helical" evidence="1">
    <location>
        <begin position="110"/>
        <end position="130"/>
    </location>
</feature>
<feature type="transmembrane region" description="Helical" evidence="1">
    <location>
        <begin position="141"/>
        <end position="161"/>
    </location>
</feature>
<feature type="transmembrane region" description="Helical" evidence="1">
    <location>
        <begin position="181"/>
        <end position="201"/>
    </location>
</feature>
<feature type="transmembrane region" description="Helical" evidence="1">
    <location>
        <begin position="202"/>
        <end position="222"/>
    </location>
</feature>
<feature type="transmembrane region" description="Helical" evidence="1">
    <location>
        <begin position="231"/>
        <end position="251"/>
    </location>
</feature>
<organism>
    <name type="scientific">Clostridium perfringens (strain ATCC 13124 / DSM 756 / JCM 1290 / NCIMB 6125 / NCTC 8237 / Type A)</name>
    <dbReference type="NCBI Taxonomy" id="195103"/>
    <lineage>
        <taxon>Bacteria</taxon>
        <taxon>Bacillati</taxon>
        <taxon>Bacillota</taxon>
        <taxon>Clostridia</taxon>
        <taxon>Eubacteriales</taxon>
        <taxon>Clostridiaceae</taxon>
        <taxon>Clostridium</taxon>
    </lineage>
</organism>